<keyword id="KW-0002">3D-structure</keyword>
<keyword id="KW-0961">Cell wall biogenesis/degradation</keyword>
<keyword id="KW-0963">Cytoplasm</keyword>
<keyword id="KW-1017">Isopeptide bond</keyword>
<keyword id="KW-0597">Phosphoprotein</keyword>
<keyword id="KW-1185">Reference proteome</keyword>
<keyword id="KW-0832">Ubl conjugation</keyword>
<evidence type="ECO:0000256" key="1">
    <source>
        <dbReference type="SAM" id="MobiDB-lite"/>
    </source>
</evidence>
<evidence type="ECO:0000269" key="2">
    <source>
    </source>
</evidence>
<evidence type="ECO:0000269" key="3">
    <source>
    </source>
</evidence>
<evidence type="ECO:0000269" key="4">
    <source>
    </source>
</evidence>
<evidence type="ECO:0000269" key="5">
    <source>
    </source>
</evidence>
<evidence type="ECO:0000305" key="6"/>
<evidence type="ECO:0007744" key="7">
    <source>
    </source>
</evidence>
<evidence type="ECO:0007744" key="8">
    <source>
    </source>
</evidence>
<evidence type="ECO:0007744" key="9">
    <source>
    </source>
</evidence>
<evidence type="ECO:0007744" key="10">
    <source>
    </source>
</evidence>
<comment type="function">
    <text>May be involved in cell wall organization and biogenesis.</text>
</comment>
<comment type="interaction">
    <interactant intactId="EBI-21359">
        <id>P38167</id>
    </interactant>
    <interactant intactId="EBI-16219">
        <id>P39940</id>
        <label>RSP5</label>
    </interactant>
    <organismsDiffer>false</organismsDiffer>
    <experiments>2</experiments>
</comment>
<comment type="subcellular location">
    <subcellularLocation>
        <location evidence="4">Cytoplasm</location>
    </subcellularLocation>
</comment>
<comment type="miscellaneous">
    <text evidence="5">Present with 799 molecules/cell in log phase SD medium.</text>
</comment>
<comment type="similarity">
    <text evidence="6">Belongs to the CSR2 family.</text>
</comment>
<comment type="sequence caution" evidence="6">
    <conflict type="frameshift">
        <sequence resource="EMBL-CDS" id="CAA55995"/>
    </conflict>
</comment>
<comment type="sequence caution" evidence="6">
    <conflict type="frameshift">
        <sequence resource="EMBL-CDS" id="CAB39760"/>
    </conflict>
</comment>
<accession>P38167</accession>
<accession>D6VPQ2</accession>
<sequence>MPFITSRPVAKNSSHSLSETDLNQSKGQPFQPSPTKKLGSMQQRRRSSTIRHALSSLLGGANVHSPAVLNNTTKGGNNNGNIRSSNTDAQLLGKKQNKQPPPNARRHSTTAIQGSISDSATTTPRSSTSDTNRRTSGRLSVDQEPRISGGRYSQIEEDSTVLDFDDDHNSSAVVSSDLSSTSLTRLANSKKFNEQFLIEYLTARGLLGPKTVLSNEYLKISISTSGESVFLPTISSNDDEYLSRLNGLNDGTDDAEADFFMDGIDQQEGNTPSLATTAAATESGGSINENRDTLLRENNSGDHPGSGSELNTRSVEIDSSMVSYSIAVIVSVKKPTRFTDMQLELCSRVKVFWNTGVPPTKTFNEEFYNAASMKWNLNDENFDLFVPLSISPDDQMIENNSNDRQMRLFKNIPTEERLYLDKTKTKASLLNAIDVNKTHLYQPGDYVFLVPVVFSNHIPETIYLPSARVSYRLRLATKAINRKGFYRQDSNSPQPIVSPDSSSSLSSTTSSLKLTETESAQAHRRISNTLFSKVKNHLHMSSHQLKNEESGEEDIFAEYPIKVIRTPPPVAVSTANKPIYINRVWTDSLSYEISFAQKYVSLNSEVPIKIKLAPICKNVCVKRIHVSITERVTFVSKGYEYEYDQTDPVAKDPYNPYYLDFASKRRKERSVSLFEIRTKEKGTRALREEIVENSFNDNLLSYSPFDDDSDSKGNPKERLGITEPIIIETKLKFPKYEDLDKRTAKIIPPYGIDAYTSIPNPEHAVANGPSHRRPSVIGFLSGHKGSKSHEENEKPVYDPKFHQTIIKSNSGLPVKTHTRLNTPKRGLYLDSLHFSNVYCRHKLEIMLRISKPDPECPSKLRHYEVLIDTPIFLVSEQCNSGNMELPTYDMATMEGKGNQVPLSMNSDFFGNTCPPPPTFEEAISVPASPIVSPMGSPNIMASYDPDLLSIQQLNLSRTTSVSGPSGYSDDAGVPNVNRNSISNANAMNGSISNSAFVSGNSGQGVARARATSVNDRSRFNNLDKLLSTPSPVNRSHNSSPTNGLSQANGTVRIPNATTENSKDKQNEFFKKGYTLANVKDDEEQEGIVSSSSADSLLSHGNEPPRYDEIVPLMSDEE</sequence>
<dbReference type="EMBL" id="X79489">
    <property type="protein sequence ID" value="CAA55995.1"/>
    <property type="status" value="ALT_FRAME"/>
    <property type="molecule type" value="Genomic_DNA"/>
</dbReference>
<dbReference type="EMBL" id="Z35862">
    <property type="protein sequence ID" value="CAB39760.1"/>
    <property type="status" value="ALT_FRAME"/>
    <property type="molecule type" value="Genomic_DNA"/>
</dbReference>
<dbReference type="EMBL" id="BK006936">
    <property type="protein sequence ID" value="DAA07022.1"/>
    <property type="molecule type" value="Genomic_DNA"/>
</dbReference>
<dbReference type="PIR" id="S45395">
    <property type="entry name" value="S45395"/>
</dbReference>
<dbReference type="RefSeq" id="NP_009449.1">
    <property type="nucleotide sequence ID" value="NM_001178341.1"/>
</dbReference>
<dbReference type="PDB" id="7QQY">
    <property type="method" value="X-ray"/>
    <property type="resolution" value="1.26 A"/>
    <property type="chains" value="B=2-8"/>
</dbReference>
<dbReference type="PDBsum" id="7QQY"/>
<dbReference type="SMR" id="P38167"/>
<dbReference type="BioGRID" id="32602">
    <property type="interactions" value="133"/>
</dbReference>
<dbReference type="DIP" id="DIP-791N"/>
<dbReference type="FunCoup" id="P38167">
    <property type="interactions" value="103"/>
</dbReference>
<dbReference type="IntAct" id="P38167">
    <property type="interactions" value="23"/>
</dbReference>
<dbReference type="MINT" id="P38167"/>
<dbReference type="STRING" id="4932.YBL101C"/>
<dbReference type="GlyGen" id="P38167">
    <property type="glycosylation" value="1 site, 1 O-linked glycan (1 site)"/>
</dbReference>
<dbReference type="iPTMnet" id="P38167"/>
<dbReference type="PaxDb" id="4932-YBL101C"/>
<dbReference type="PeptideAtlas" id="P38167"/>
<dbReference type="TopDownProteomics" id="P38167"/>
<dbReference type="EnsemblFungi" id="YBL101C_mRNA">
    <property type="protein sequence ID" value="YBL101C"/>
    <property type="gene ID" value="YBL101C"/>
</dbReference>
<dbReference type="GeneID" id="852173"/>
<dbReference type="KEGG" id="sce:YBL101C"/>
<dbReference type="AGR" id="SGD:S000000197"/>
<dbReference type="SGD" id="S000000197">
    <property type="gene designation" value="ECM21"/>
</dbReference>
<dbReference type="VEuPathDB" id="FungiDB:YBL101C"/>
<dbReference type="eggNOG" id="KOG3780">
    <property type="taxonomic scope" value="Eukaryota"/>
</dbReference>
<dbReference type="GeneTree" id="ENSGT00940000176445"/>
<dbReference type="HOGENOM" id="CLU_006239_0_0_1"/>
<dbReference type="InParanoid" id="P38167"/>
<dbReference type="OMA" id="NMELPTY"/>
<dbReference type="OrthoDB" id="2333384at2759"/>
<dbReference type="BioCyc" id="YEAST:G3O-28985-MONOMER"/>
<dbReference type="Reactome" id="R-SCE-844456">
    <property type="pathway name" value="The NLRP3 inflammasome"/>
</dbReference>
<dbReference type="BioGRID-ORCS" id="852173">
    <property type="hits" value="1 hit in 10 CRISPR screens"/>
</dbReference>
<dbReference type="PRO" id="PR:P38167"/>
<dbReference type="Proteomes" id="UP000002311">
    <property type="component" value="Chromosome II"/>
</dbReference>
<dbReference type="RNAct" id="P38167">
    <property type="molecule type" value="protein"/>
</dbReference>
<dbReference type="GO" id="GO:0005737">
    <property type="term" value="C:cytoplasm"/>
    <property type="evidence" value="ECO:0007005"/>
    <property type="project" value="SGD"/>
</dbReference>
<dbReference type="GO" id="GO:0005829">
    <property type="term" value="C:cytosol"/>
    <property type="evidence" value="ECO:0007005"/>
    <property type="project" value="SGD"/>
</dbReference>
<dbReference type="GO" id="GO:0030674">
    <property type="term" value="F:protein-macromolecule adaptor activity"/>
    <property type="evidence" value="ECO:0000318"/>
    <property type="project" value="GO_Central"/>
</dbReference>
<dbReference type="GO" id="GO:0031625">
    <property type="term" value="F:ubiquitin protein ligase binding"/>
    <property type="evidence" value="ECO:0000353"/>
    <property type="project" value="SGD"/>
</dbReference>
<dbReference type="GO" id="GO:0071555">
    <property type="term" value="P:cell wall organization"/>
    <property type="evidence" value="ECO:0007669"/>
    <property type="project" value="UniProtKB-KW"/>
</dbReference>
<dbReference type="GO" id="GO:0071230">
    <property type="term" value="P:cellular response to amino acid stimulus"/>
    <property type="evidence" value="ECO:0000315"/>
    <property type="project" value="SGD"/>
</dbReference>
<dbReference type="GO" id="GO:0009267">
    <property type="term" value="P:cellular response to starvation"/>
    <property type="evidence" value="ECO:0000315"/>
    <property type="project" value="SGD"/>
</dbReference>
<dbReference type="GO" id="GO:0033554">
    <property type="term" value="P:cellular response to stress"/>
    <property type="evidence" value="ECO:0000315"/>
    <property type="project" value="SGD"/>
</dbReference>
<dbReference type="GO" id="GO:0070086">
    <property type="term" value="P:ubiquitin-dependent endocytosis"/>
    <property type="evidence" value="ECO:0000315"/>
    <property type="project" value="SGD"/>
</dbReference>
<dbReference type="InterPro" id="IPR011022">
    <property type="entry name" value="Arrestin_C-like"/>
</dbReference>
<dbReference type="InterPro" id="IPR050357">
    <property type="entry name" value="Arrestin_domain-protein"/>
</dbReference>
<dbReference type="PANTHER" id="PTHR11188">
    <property type="entry name" value="ARRESTIN DOMAIN CONTAINING PROTEIN"/>
    <property type="match status" value="1"/>
</dbReference>
<dbReference type="PANTHER" id="PTHR11188:SF168">
    <property type="entry name" value="PROTEIN ECM21-RELATED"/>
    <property type="match status" value="1"/>
</dbReference>
<dbReference type="Pfam" id="PF02752">
    <property type="entry name" value="Arrestin_C"/>
    <property type="match status" value="1"/>
</dbReference>
<dbReference type="SMART" id="SM01017">
    <property type="entry name" value="Arrestin_C"/>
    <property type="match status" value="1"/>
</dbReference>
<reference key="1">
    <citation type="journal article" date="1995" name="Yeast">
        <title>Sequence analysis of a 78.6 kb segment of the left end of Saccharomyces cerevisiae chromosome II.</title>
        <authorList>
            <person name="Obermaier B."/>
            <person name="Gassenhuber J."/>
            <person name="Piravandi E."/>
            <person name="Domdey H."/>
        </authorList>
    </citation>
    <scope>NUCLEOTIDE SEQUENCE [GENOMIC DNA]</scope>
    <source>
        <strain>ATCC 204508 / S288c</strain>
    </source>
</reference>
<reference key="2">
    <citation type="journal article" date="1994" name="EMBO J.">
        <title>Complete DNA sequence of yeast chromosome II.</title>
        <authorList>
            <person name="Feldmann H."/>
            <person name="Aigle M."/>
            <person name="Aljinovic G."/>
            <person name="Andre B."/>
            <person name="Baclet M.C."/>
            <person name="Barthe C."/>
            <person name="Baur A."/>
            <person name="Becam A.-M."/>
            <person name="Biteau N."/>
            <person name="Boles E."/>
            <person name="Brandt T."/>
            <person name="Brendel M."/>
            <person name="Brueckner M."/>
            <person name="Bussereau F."/>
            <person name="Christiansen C."/>
            <person name="Contreras R."/>
            <person name="Crouzet M."/>
            <person name="Cziepluch C."/>
            <person name="Demolis N."/>
            <person name="Delaveau T."/>
            <person name="Doignon F."/>
            <person name="Domdey H."/>
            <person name="Duesterhus S."/>
            <person name="Dubois E."/>
            <person name="Dujon B."/>
            <person name="El Bakkoury M."/>
            <person name="Entian K.-D."/>
            <person name="Feuermann M."/>
            <person name="Fiers W."/>
            <person name="Fobo G.M."/>
            <person name="Fritz C."/>
            <person name="Gassenhuber J."/>
            <person name="Glansdorff N."/>
            <person name="Goffeau A."/>
            <person name="Grivell L.A."/>
            <person name="de Haan M."/>
            <person name="Hein C."/>
            <person name="Herbert C.J."/>
            <person name="Hollenberg C.P."/>
            <person name="Holmstroem K."/>
            <person name="Jacq C."/>
            <person name="Jacquet M."/>
            <person name="Jauniaux J.-C."/>
            <person name="Jonniaux J.-L."/>
            <person name="Kallesoee T."/>
            <person name="Kiesau P."/>
            <person name="Kirchrath L."/>
            <person name="Koetter P."/>
            <person name="Korol S."/>
            <person name="Liebl S."/>
            <person name="Logghe M."/>
            <person name="Lohan A.J.E."/>
            <person name="Louis E.J."/>
            <person name="Li Z.Y."/>
            <person name="Maat M.J."/>
            <person name="Mallet L."/>
            <person name="Mannhaupt G."/>
            <person name="Messenguy F."/>
            <person name="Miosga T."/>
            <person name="Molemans F."/>
            <person name="Mueller S."/>
            <person name="Nasr F."/>
            <person name="Obermaier B."/>
            <person name="Perea J."/>
            <person name="Pierard A."/>
            <person name="Piravandi E."/>
            <person name="Pohl F.M."/>
            <person name="Pohl T.M."/>
            <person name="Potier S."/>
            <person name="Proft M."/>
            <person name="Purnelle B."/>
            <person name="Ramezani Rad M."/>
            <person name="Rieger M."/>
            <person name="Rose M."/>
            <person name="Schaaff-Gerstenschlaeger I."/>
            <person name="Scherens B."/>
            <person name="Schwarzlose C."/>
            <person name="Skala J."/>
            <person name="Slonimski P.P."/>
            <person name="Smits P.H.M."/>
            <person name="Souciet J.-L."/>
            <person name="Steensma H.Y."/>
            <person name="Stucka R."/>
            <person name="Urrestarazu L.A."/>
            <person name="van der Aart Q.J.M."/>
            <person name="Van Dyck L."/>
            <person name="Vassarotti A."/>
            <person name="Vetter I."/>
            <person name="Vierendeels F."/>
            <person name="Vissers S."/>
            <person name="Wagner G."/>
            <person name="de Wergifosse P."/>
            <person name="Wolfe K.H."/>
            <person name="Zagulski M."/>
            <person name="Zimmermann F.K."/>
            <person name="Mewes H.-W."/>
            <person name="Kleine K."/>
        </authorList>
    </citation>
    <scope>NUCLEOTIDE SEQUENCE [LARGE SCALE GENOMIC DNA]</scope>
    <source>
        <strain>ATCC 204508 / S288c</strain>
    </source>
</reference>
<reference key="3">
    <citation type="journal article" date="2014" name="G3 (Bethesda)">
        <title>The reference genome sequence of Saccharomyces cerevisiae: Then and now.</title>
        <authorList>
            <person name="Engel S.R."/>
            <person name="Dietrich F.S."/>
            <person name="Fisk D.G."/>
            <person name="Binkley G."/>
            <person name="Balakrishnan R."/>
            <person name="Costanzo M.C."/>
            <person name="Dwight S.S."/>
            <person name="Hitz B.C."/>
            <person name="Karra K."/>
            <person name="Nash R.S."/>
            <person name="Weng S."/>
            <person name="Wong E.D."/>
            <person name="Lloyd P."/>
            <person name="Skrzypek M.S."/>
            <person name="Miyasato S.R."/>
            <person name="Simison M."/>
            <person name="Cherry J.M."/>
        </authorList>
    </citation>
    <scope>GENOME REANNOTATION</scope>
    <source>
        <strain>ATCC 204508 / S288c</strain>
    </source>
</reference>
<reference key="4">
    <citation type="journal article" date="1997" name="Genetics">
        <title>Large scale identification of genes involved in cell surface biosynthesis and architecture in Saccharomyces cerevisiae.</title>
        <authorList>
            <person name="Lussier M."/>
            <person name="White A.-M."/>
            <person name="Sheraton J."/>
            <person name="di Paolo T."/>
            <person name="Treadwell J."/>
            <person name="Southard S.B."/>
            <person name="Horenstein C.I."/>
            <person name="Chen-Weiner J."/>
            <person name="Ram A.F.J."/>
            <person name="Kapteyn J.C."/>
            <person name="Roemer T.W."/>
            <person name="Vo D.H."/>
            <person name="Bondoc D.C."/>
            <person name="Hall J."/>
            <person name="Zhong W.-W."/>
            <person name="Sdicu A.-M."/>
            <person name="Davies J."/>
            <person name="Klis F.M."/>
            <person name="Robbins P.W."/>
            <person name="Bussey H."/>
        </authorList>
    </citation>
    <scope>IDENTIFICATION</scope>
</reference>
<reference key="5">
    <citation type="journal article" date="2003" name="Nature">
        <title>Global analysis of protein localization in budding yeast.</title>
        <authorList>
            <person name="Huh W.-K."/>
            <person name="Falvo J.V."/>
            <person name="Gerke L.C."/>
            <person name="Carroll A.S."/>
            <person name="Howson R.W."/>
            <person name="Weissman J.S."/>
            <person name="O'Shea E.K."/>
        </authorList>
    </citation>
    <scope>SUBCELLULAR LOCATION [LARGE SCALE ANALYSIS]</scope>
</reference>
<reference key="6">
    <citation type="journal article" date="2003" name="Nature">
        <title>Global analysis of protein expression in yeast.</title>
        <authorList>
            <person name="Ghaemmaghami S."/>
            <person name="Huh W.-K."/>
            <person name="Bower K."/>
            <person name="Howson R.W."/>
            <person name="Belle A."/>
            <person name="Dephoure N."/>
            <person name="O'Shea E.K."/>
            <person name="Weissman J.S."/>
        </authorList>
    </citation>
    <scope>LEVEL OF PROTEIN EXPRESSION [LARGE SCALE ANALYSIS]</scope>
</reference>
<reference key="7">
    <citation type="journal article" date="2003" name="Nat. Biotechnol.">
        <title>A proteomics approach to understanding protein ubiquitination.</title>
        <authorList>
            <person name="Peng J."/>
            <person name="Schwartz D."/>
            <person name="Elias J.E."/>
            <person name="Thoreen C.C."/>
            <person name="Cheng D."/>
            <person name="Marsischky G."/>
            <person name="Roelofs J."/>
            <person name="Finley D."/>
            <person name="Gygi S.P."/>
        </authorList>
    </citation>
    <scope>UBIQUITINATION [LARGE SCALE ANALYSIS] AT LYS-577; LYS-651; LYS-712; LYS-794; LYS-807 AND LYS-1024</scope>
    <scope>IDENTIFICATION BY MASS SPECTROMETRY</scope>
    <source>
        <strain>SUB592</strain>
    </source>
</reference>
<reference key="8">
    <citation type="journal article" date="2003" name="Proc. Natl. Acad. Sci. U.S.A.">
        <title>A subset of membrane-associated proteins is ubiquitinated in response to mutations in the endoplasmic reticulum degradation machinery.</title>
        <authorList>
            <person name="Hitchcock A.L."/>
            <person name="Auld K."/>
            <person name="Gygi S.P."/>
            <person name="Silver P.A."/>
        </authorList>
    </citation>
    <scope>UBIQUITINATION [LARGE SCALE ANALYSIS] AT LYS-577</scope>
    <scope>IDENTIFICATION BY MASS SPECTROMETRY</scope>
</reference>
<reference key="9">
    <citation type="journal article" date="2007" name="J. Proteome Res.">
        <title>Large-scale phosphorylation analysis of alpha-factor-arrested Saccharomyces cerevisiae.</title>
        <authorList>
            <person name="Li X."/>
            <person name="Gerber S.A."/>
            <person name="Rudner A.D."/>
            <person name="Beausoleil S.A."/>
            <person name="Haas W."/>
            <person name="Villen J."/>
            <person name="Elias J.E."/>
            <person name="Gygi S.P."/>
        </authorList>
    </citation>
    <scope>PHOSPHORYLATION [LARGE SCALE ANALYSIS] AT SER-140; SER-527 AND SER-775</scope>
    <scope>IDENTIFICATION BY MASS SPECTROMETRY [LARGE SCALE ANALYSIS]</scope>
    <source>
        <strain>ADR376</strain>
    </source>
</reference>
<reference key="10">
    <citation type="journal article" date="2008" name="Mol. Cell. Proteomics">
        <title>A multidimensional chromatography technology for in-depth phosphoproteome analysis.</title>
        <authorList>
            <person name="Albuquerque C.P."/>
            <person name="Smolka M.B."/>
            <person name="Payne S.H."/>
            <person name="Bafna V."/>
            <person name="Eng J."/>
            <person name="Zhou H."/>
        </authorList>
    </citation>
    <scope>PHOSPHORYLATION [LARGE SCALE ANALYSIS] AT SER-140; SER-286 AND SER-550</scope>
    <scope>IDENTIFICATION BY MASS SPECTROMETRY [LARGE SCALE ANALYSIS]</scope>
</reference>
<reference key="11">
    <citation type="journal article" date="2009" name="Science">
        <title>Global analysis of Cdk1 substrate phosphorylation sites provides insights into evolution.</title>
        <authorList>
            <person name="Holt L.J."/>
            <person name="Tuch B.B."/>
            <person name="Villen J."/>
            <person name="Johnson A.D."/>
            <person name="Gygi S.P."/>
            <person name="Morgan D.O."/>
        </authorList>
    </citation>
    <scope>PHOSPHORYLATION [LARGE SCALE ANALYSIS] AT SER-18; SER-115; SER-775 AND SER-1035</scope>
    <scope>IDENTIFICATION BY MASS SPECTROMETRY [LARGE SCALE ANALYSIS]</scope>
</reference>
<reference key="12">
    <citation type="journal article" date="2012" name="Proteomics">
        <title>Sites of ubiquitin attachment in Saccharomyces cerevisiae.</title>
        <authorList>
            <person name="Starita L.M."/>
            <person name="Lo R.S."/>
            <person name="Eng J.K."/>
            <person name="von Haller P.D."/>
            <person name="Fields S."/>
        </authorList>
    </citation>
    <scope>UBIQUITINATION [LARGE SCALE ANALYSIS] AT LYS-191 AND LYS-794</scope>
    <scope>IDENTIFICATION BY MASS SPECTROMETRY [LARGE SCALE ANALYSIS]</scope>
</reference>
<feature type="chain" id="PRO_0000086917" description="Protein ECM21">
    <location>
        <begin position="1"/>
        <end position="1117"/>
    </location>
</feature>
<feature type="region of interest" description="Disordered" evidence="1">
    <location>
        <begin position="1"/>
        <end position="48"/>
    </location>
</feature>
<feature type="region of interest" description="Disordered" evidence="1">
    <location>
        <begin position="63"/>
        <end position="155"/>
    </location>
</feature>
<feature type="region of interest" description="Disordered" evidence="1">
    <location>
        <begin position="275"/>
        <end position="312"/>
    </location>
</feature>
<feature type="region of interest" description="Disordered" evidence="1">
    <location>
        <begin position="486"/>
        <end position="523"/>
    </location>
</feature>
<feature type="region of interest" description="Disordered" evidence="1">
    <location>
        <begin position="1016"/>
        <end position="1065"/>
    </location>
</feature>
<feature type="region of interest" description="Disordered" evidence="1">
    <location>
        <begin position="1079"/>
        <end position="1117"/>
    </location>
</feature>
<feature type="compositionally biased region" description="Polar residues" evidence="1">
    <location>
        <begin position="11"/>
        <end position="34"/>
    </location>
</feature>
<feature type="compositionally biased region" description="Low complexity" evidence="1">
    <location>
        <begin position="70"/>
        <end position="81"/>
    </location>
</feature>
<feature type="compositionally biased region" description="Low complexity" evidence="1">
    <location>
        <begin position="117"/>
        <end position="130"/>
    </location>
</feature>
<feature type="compositionally biased region" description="Low complexity" evidence="1">
    <location>
        <begin position="501"/>
        <end position="519"/>
    </location>
</feature>
<feature type="compositionally biased region" description="Polar residues" evidence="1">
    <location>
        <begin position="1027"/>
        <end position="1059"/>
    </location>
</feature>
<feature type="compositionally biased region" description="Low complexity" evidence="1">
    <location>
        <begin position="1089"/>
        <end position="1098"/>
    </location>
</feature>
<feature type="modified residue" description="Phosphoserine" evidence="9">
    <location>
        <position position="18"/>
    </location>
</feature>
<feature type="modified residue" description="Phosphoserine" evidence="9">
    <location>
        <position position="115"/>
    </location>
</feature>
<feature type="modified residue" description="Phosphoserine" evidence="7 8">
    <location>
        <position position="140"/>
    </location>
</feature>
<feature type="modified residue" description="Phosphoserine" evidence="8">
    <location>
        <position position="286"/>
    </location>
</feature>
<feature type="modified residue" description="Phosphoserine" evidence="7">
    <location>
        <position position="527"/>
    </location>
</feature>
<feature type="modified residue" description="Phosphoserine" evidence="8">
    <location>
        <position position="550"/>
    </location>
</feature>
<feature type="modified residue" description="Phosphoserine" evidence="7 9">
    <location>
        <position position="775"/>
    </location>
</feature>
<feature type="modified residue" description="Phosphoserine" evidence="9">
    <location>
        <position position="1035"/>
    </location>
</feature>
<feature type="cross-link" description="Glycyl lysine isopeptide (Lys-Gly) (interchain with G-Cter in ubiquitin)" evidence="10">
    <location>
        <position position="191"/>
    </location>
</feature>
<feature type="cross-link" description="Glycyl lysine isopeptide (Lys-Gly) (interchain with G-Cter in ubiquitin)" evidence="2 3">
    <location>
        <position position="577"/>
    </location>
</feature>
<feature type="cross-link" description="Glycyl lysine isopeptide (Lys-Gly) (interchain with G-Cter in ubiquitin)" evidence="2">
    <location>
        <position position="651"/>
    </location>
</feature>
<feature type="cross-link" description="Glycyl lysine isopeptide (Lys-Gly) (interchain with G-Cter in ubiquitin)" evidence="2">
    <location>
        <position position="712"/>
    </location>
</feature>
<feature type="cross-link" description="Glycyl lysine isopeptide (Lys-Gly) (interchain with G-Cter in ubiquitin)" evidence="10">
    <location>
        <position position="794"/>
    </location>
</feature>
<feature type="cross-link" description="Glycyl lysine isopeptide (Lys-Gly) (interchain with G-Cter in ubiquitin)" evidence="2">
    <location>
        <position position="807"/>
    </location>
</feature>
<feature type="cross-link" description="Glycyl lysine isopeptide (Lys-Gly) (interchain with G-Cter in ubiquitin)" evidence="2">
    <location>
        <position position="1024"/>
    </location>
</feature>
<feature type="sequence conflict" description="In Ref. 1 and 2." evidence="6" ref="1 2">
    <original>PSGY</original>
    <variation>HPDT</variation>
    <location>
        <begin position="964"/>
        <end position="967"/>
    </location>
</feature>
<gene>
    <name type="primary">ECM21</name>
    <name type="ordered locus">YBL101C</name>
    <name type="ORF">YBL0814</name>
</gene>
<name>ECM21_YEAST</name>
<protein>
    <recommendedName>
        <fullName>Protein ECM21</fullName>
    </recommendedName>
    <alternativeName>
        <fullName>Extracellular mutant protein 21</fullName>
    </alternativeName>
</protein>
<organism>
    <name type="scientific">Saccharomyces cerevisiae (strain ATCC 204508 / S288c)</name>
    <name type="common">Baker's yeast</name>
    <dbReference type="NCBI Taxonomy" id="559292"/>
    <lineage>
        <taxon>Eukaryota</taxon>
        <taxon>Fungi</taxon>
        <taxon>Dikarya</taxon>
        <taxon>Ascomycota</taxon>
        <taxon>Saccharomycotina</taxon>
        <taxon>Saccharomycetes</taxon>
        <taxon>Saccharomycetales</taxon>
        <taxon>Saccharomycetaceae</taxon>
        <taxon>Saccharomyces</taxon>
    </lineage>
</organism>
<proteinExistence type="evidence at protein level"/>